<sequence>MSLGLVGRKVGMTRIFTAEGDSIPVTVLDVSDNRVTQIKTVETDGYTAVQVAFGTRRASRVTKPLAGHLAKAGVQAGEILKEFQIDAAKAAELSNGTVVGPDLFEVGQKVDVQGVSIGKGYAGTIKRYNFASGRASHGNSRSHNVPGSIGMAQDPGRVFPGKRMTGHMGDDTVTVQNLEIARIDADRKLLLVKGAVPGAKGGKVFVTPAVKTRAVKGAK</sequence>
<dbReference type="EMBL" id="CP001052">
    <property type="protein sequence ID" value="ACD18034.1"/>
    <property type="molecule type" value="Genomic_DNA"/>
</dbReference>
<dbReference type="RefSeq" id="WP_007180137.1">
    <property type="nucleotide sequence ID" value="NC_010681.1"/>
</dbReference>
<dbReference type="SMR" id="B2T751"/>
<dbReference type="STRING" id="398527.Bphyt_3644"/>
<dbReference type="GeneID" id="97055892"/>
<dbReference type="KEGG" id="bpy:Bphyt_3644"/>
<dbReference type="eggNOG" id="COG0087">
    <property type="taxonomic scope" value="Bacteria"/>
</dbReference>
<dbReference type="HOGENOM" id="CLU_044142_4_1_4"/>
<dbReference type="OrthoDB" id="9806135at2"/>
<dbReference type="Proteomes" id="UP000001739">
    <property type="component" value="Chromosome 1"/>
</dbReference>
<dbReference type="GO" id="GO:0022625">
    <property type="term" value="C:cytosolic large ribosomal subunit"/>
    <property type="evidence" value="ECO:0007669"/>
    <property type="project" value="TreeGrafter"/>
</dbReference>
<dbReference type="GO" id="GO:0019843">
    <property type="term" value="F:rRNA binding"/>
    <property type="evidence" value="ECO:0007669"/>
    <property type="project" value="UniProtKB-UniRule"/>
</dbReference>
<dbReference type="GO" id="GO:0003735">
    <property type="term" value="F:structural constituent of ribosome"/>
    <property type="evidence" value="ECO:0007669"/>
    <property type="project" value="InterPro"/>
</dbReference>
<dbReference type="GO" id="GO:0006412">
    <property type="term" value="P:translation"/>
    <property type="evidence" value="ECO:0007669"/>
    <property type="project" value="UniProtKB-UniRule"/>
</dbReference>
<dbReference type="FunFam" id="2.40.30.10:FF:000004">
    <property type="entry name" value="50S ribosomal protein L3"/>
    <property type="match status" value="1"/>
</dbReference>
<dbReference type="FunFam" id="3.30.160.810:FF:000001">
    <property type="entry name" value="50S ribosomal protein L3"/>
    <property type="match status" value="1"/>
</dbReference>
<dbReference type="Gene3D" id="3.30.160.810">
    <property type="match status" value="1"/>
</dbReference>
<dbReference type="Gene3D" id="2.40.30.10">
    <property type="entry name" value="Translation factors"/>
    <property type="match status" value="1"/>
</dbReference>
<dbReference type="HAMAP" id="MF_01325_B">
    <property type="entry name" value="Ribosomal_uL3_B"/>
    <property type="match status" value="1"/>
</dbReference>
<dbReference type="InterPro" id="IPR000597">
    <property type="entry name" value="Ribosomal_uL3"/>
</dbReference>
<dbReference type="InterPro" id="IPR019927">
    <property type="entry name" value="Ribosomal_uL3_bac/org-type"/>
</dbReference>
<dbReference type="InterPro" id="IPR019926">
    <property type="entry name" value="Ribosomal_uL3_CS"/>
</dbReference>
<dbReference type="InterPro" id="IPR009000">
    <property type="entry name" value="Transl_B-barrel_sf"/>
</dbReference>
<dbReference type="NCBIfam" id="TIGR03625">
    <property type="entry name" value="L3_bact"/>
    <property type="match status" value="1"/>
</dbReference>
<dbReference type="PANTHER" id="PTHR11229">
    <property type="entry name" value="50S RIBOSOMAL PROTEIN L3"/>
    <property type="match status" value="1"/>
</dbReference>
<dbReference type="PANTHER" id="PTHR11229:SF16">
    <property type="entry name" value="LARGE RIBOSOMAL SUBUNIT PROTEIN UL3C"/>
    <property type="match status" value="1"/>
</dbReference>
<dbReference type="Pfam" id="PF00297">
    <property type="entry name" value="Ribosomal_L3"/>
    <property type="match status" value="1"/>
</dbReference>
<dbReference type="SUPFAM" id="SSF50447">
    <property type="entry name" value="Translation proteins"/>
    <property type="match status" value="1"/>
</dbReference>
<dbReference type="PROSITE" id="PS00474">
    <property type="entry name" value="RIBOSOMAL_L3"/>
    <property type="match status" value="1"/>
</dbReference>
<name>RL3_PARPJ</name>
<gene>
    <name evidence="1" type="primary">rplC</name>
    <name type="ordered locus">Bphyt_3644</name>
</gene>
<accession>B2T751</accession>
<keyword id="KW-0488">Methylation</keyword>
<keyword id="KW-0687">Ribonucleoprotein</keyword>
<keyword id="KW-0689">Ribosomal protein</keyword>
<keyword id="KW-0694">RNA-binding</keyword>
<keyword id="KW-0699">rRNA-binding</keyword>
<comment type="function">
    <text evidence="1">One of the primary rRNA binding proteins, it binds directly near the 3'-end of the 23S rRNA, where it nucleates assembly of the 50S subunit.</text>
</comment>
<comment type="subunit">
    <text evidence="1">Part of the 50S ribosomal subunit. Forms a cluster with proteins L14 and L19.</text>
</comment>
<comment type="PTM">
    <text evidence="1">Methylated by PrmB.</text>
</comment>
<comment type="similarity">
    <text evidence="1">Belongs to the universal ribosomal protein uL3 family.</text>
</comment>
<feature type="chain" id="PRO_1000141836" description="Large ribosomal subunit protein uL3">
    <location>
        <begin position="1"/>
        <end position="219"/>
    </location>
</feature>
<feature type="region of interest" description="Disordered" evidence="2">
    <location>
        <begin position="134"/>
        <end position="153"/>
    </location>
</feature>
<feature type="modified residue" description="N5-methylglutamine" evidence="1">
    <location>
        <position position="153"/>
    </location>
</feature>
<proteinExistence type="inferred from homology"/>
<reference key="1">
    <citation type="journal article" date="2011" name="J. Bacteriol.">
        <title>Complete genome sequence of the plant growth-promoting endophyte Burkholderia phytofirmans strain PsJN.</title>
        <authorList>
            <person name="Weilharter A."/>
            <person name="Mitter B."/>
            <person name="Shin M.V."/>
            <person name="Chain P.S."/>
            <person name="Nowak J."/>
            <person name="Sessitsch A."/>
        </authorList>
    </citation>
    <scope>NUCLEOTIDE SEQUENCE [LARGE SCALE GENOMIC DNA]</scope>
    <source>
        <strain>DSM 17436 / LMG 22146 / PsJN</strain>
    </source>
</reference>
<protein>
    <recommendedName>
        <fullName evidence="1">Large ribosomal subunit protein uL3</fullName>
    </recommendedName>
    <alternativeName>
        <fullName evidence="3">50S ribosomal protein L3</fullName>
    </alternativeName>
</protein>
<evidence type="ECO:0000255" key="1">
    <source>
        <dbReference type="HAMAP-Rule" id="MF_01325"/>
    </source>
</evidence>
<evidence type="ECO:0000256" key="2">
    <source>
        <dbReference type="SAM" id="MobiDB-lite"/>
    </source>
</evidence>
<evidence type="ECO:0000305" key="3"/>
<organism>
    <name type="scientific">Paraburkholderia phytofirmans (strain DSM 17436 / LMG 22146 / PsJN)</name>
    <name type="common">Burkholderia phytofirmans</name>
    <dbReference type="NCBI Taxonomy" id="398527"/>
    <lineage>
        <taxon>Bacteria</taxon>
        <taxon>Pseudomonadati</taxon>
        <taxon>Pseudomonadota</taxon>
        <taxon>Betaproteobacteria</taxon>
        <taxon>Burkholderiales</taxon>
        <taxon>Burkholderiaceae</taxon>
        <taxon>Paraburkholderia</taxon>
    </lineage>
</organism>